<name>RL3_SHEB5</name>
<organism>
    <name type="scientific">Shewanella baltica (strain OS155 / ATCC BAA-1091)</name>
    <dbReference type="NCBI Taxonomy" id="325240"/>
    <lineage>
        <taxon>Bacteria</taxon>
        <taxon>Pseudomonadati</taxon>
        <taxon>Pseudomonadota</taxon>
        <taxon>Gammaproteobacteria</taxon>
        <taxon>Alteromonadales</taxon>
        <taxon>Shewanellaceae</taxon>
        <taxon>Shewanella</taxon>
    </lineage>
</organism>
<gene>
    <name evidence="1" type="primary">rplC</name>
    <name type="ordered locus">Sbal_4170</name>
</gene>
<comment type="function">
    <text evidence="1">One of the primary rRNA binding proteins, it binds directly near the 3'-end of the 23S rRNA, where it nucleates assembly of the 50S subunit.</text>
</comment>
<comment type="subunit">
    <text evidence="1">Part of the 50S ribosomal subunit. Forms a cluster with proteins L14 and L19.</text>
</comment>
<comment type="PTM">
    <text evidence="1">Methylated by PrmB.</text>
</comment>
<comment type="similarity">
    <text evidence="1">Belongs to the universal ribosomal protein uL3 family.</text>
</comment>
<reference key="1">
    <citation type="submission" date="2007-02" db="EMBL/GenBank/DDBJ databases">
        <title>Complete sequence of chromosome of Shewanella baltica OS155.</title>
        <authorList>
            <consortium name="US DOE Joint Genome Institute"/>
            <person name="Copeland A."/>
            <person name="Lucas S."/>
            <person name="Lapidus A."/>
            <person name="Barry K."/>
            <person name="Detter J.C."/>
            <person name="Glavina del Rio T."/>
            <person name="Hammon N."/>
            <person name="Israni S."/>
            <person name="Dalin E."/>
            <person name="Tice H."/>
            <person name="Pitluck S."/>
            <person name="Sims D.R."/>
            <person name="Brettin T."/>
            <person name="Bruce D."/>
            <person name="Han C."/>
            <person name="Tapia R."/>
            <person name="Brainard J."/>
            <person name="Schmutz J."/>
            <person name="Larimer F."/>
            <person name="Land M."/>
            <person name="Hauser L."/>
            <person name="Kyrpides N."/>
            <person name="Mikhailova N."/>
            <person name="Brettar I."/>
            <person name="Klappenbach J."/>
            <person name="Konstantinidis K."/>
            <person name="Rodrigues J."/>
            <person name="Tiedje J."/>
            <person name="Richardson P."/>
        </authorList>
    </citation>
    <scope>NUCLEOTIDE SEQUENCE [LARGE SCALE GENOMIC DNA]</scope>
    <source>
        <strain>OS155 / ATCC BAA-1091</strain>
    </source>
</reference>
<keyword id="KW-0488">Methylation</keyword>
<keyword id="KW-1185">Reference proteome</keyword>
<keyword id="KW-0687">Ribonucleoprotein</keyword>
<keyword id="KW-0689">Ribosomal protein</keyword>
<keyword id="KW-0694">RNA-binding</keyword>
<keyword id="KW-0699">rRNA-binding</keyword>
<dbReference type="EMBL" id="CP000563">
    <property type="protein sequence ID" value="ABN63635.1"/>
    <property type="molecule type" value="Genomic_DNA"/>
</dbReference>
<dbReference type="RefSeq" id="WP_006083600.1">
    <property type="nucleotide sequence ID" value="NC_009052.1"/>
</dbReference>
<dbReference type="SMR" id="A3DA72"/>
<dbReference type="STRING" id="325240.Sbal_4170"/>
<dbReference type="GeneID" id="11770559"/>
<dbReference type="KEGG" id="sbl:Sbal_4170"/>
<dbReference type="HOGENOM" id="CLU_044142_4_1_6"/>
<dbReference type="OrthoDB" id="9806135at2"/>
<dbReference type="Proteomes" id="UP000001557">
    <property type="component" value="Chromosome"/>
</dbReference>
<dbReference type="GO" id="GO:0022625">
    <property type="term" value="C:cytosolic large ribosomal subunit"/>
    <property type="evidence" value="ECO:0007669"/>
    <property type="project" value="TreeGrafter"/>
</dbReference>
<dbReference type="GO" id="GO:0019843">
    <property type="term" value="F:rRNA binding"/>
    <property type="evidence" value="ECO:0007669"/>
    <property type="project" value="UniProtKB-UniRule"/>
</dbReference>
<dbReference type="GO" id="GO:0003735">
    <property type="term" value="F:structural constituent of ribosome"/>
    <property type="evidence" value="ECO:0007669"/>
    <property type="project" value="InterPro"/>
</dbReference>
<dbReference type="GO" id="GO:0006412">
    <property type="term" value="P:translation"/>
    <property type="evidence" value="ECO:0007669"/>
    <property type="project" value="UniProtKB-UniRule"/>
</dbReference>
<dbReference type="FunFam" id="2.40.30.10:FF:000004">
    <property type="entry name" value="50S ribosomal protein L3"/>
    <property type="match status" value="1"/>
</dbReference>
<dbReference type="FunFam" id="3.30.160.810:FF:000001">
    <property type="entry name" value="50S ribosomal protein L3"/>
    <property type="match status" value="1"/>
</dbReference>
<dbReference type="Gene3D" id="3.30.160.810">
    <property type="match status" value="1"/>
</dbReference>
<dbReference type="Gene3D" id="2.40.30.10">
    <property type="entry name" value="Translation factors"/>
    <property type="match status" value="1"/>
</dbReference>
<dbReference type="HAMAP" id="MF_01325_B">
    <property type="entry name" value="Ribosomal_uL3_B"/>
    <property type="match status" value="1"/>
</dbReference>
<dbReference type="InterPro" id="IPR000597">
    <property type="entry name" value="Ribosomal_uL3"/>
</dbReference>
<dbReference type="InterPro" id="IPR019927">
    <property type="entry name" value="Ribosomal_uL3_bac/org-type"/>
</dbReference>
<dbReference type="InterPro" id="IPR019926">
    <property type="entry name" value="Ribosomal_uL3_CS"/>
</dbReference>
<dbReference type="InterPro" id="IPR009000">
    <property type="entry name" value="Transl_B-barrel_sf"/>
</dbReference>
<dbReference type="NCBIfam" id="TIGR03625">
    <property type="entry name" value="L3_bact"/>
    <property type="match status" value="1"/>
</dbReference>
<dbReference type="PANTHER" id="PTHR11229">
    <property type="entry name" value="50S RIBOSOMAL PROTEIN L3"/>
    <property type="match status" value="1"/>
</dbReference>
<dbReference type="PANTHER" id="PTHR11229:SF16">
    <property type="entry name" value="LARGE RIBOSOMAL SUBUNIT PROTEIN UL3C"/>
    <property type="match status" value="1"/>
</dbReference>
<dbReference type="Pfam" id="PF00297">
    <property type="entry name" value="Ribosomal_L3"/>
    <property type="match status" value="1"/>
</dbReference>
<dbReference type="SUPFAM" id="SSF50447">
    <property type="entry name" value="Translation proteins"/>
    <property type="match status" value="1"/>
</dbReference>
<dbReference type="PROSITE" id="PS00474">
    <property type="entry name" value="RIBOSOMAL_L3"/>
    <property type="match status" value="1"/>
</dbReference>
<protein>
    <recommendedName>
        <fullName evidence="1">Large ribosomal subunit protein uL3</fullName>
    </recommendedName>
    <alternativeName>
        <fullName evidence="3">50S ribosomal protein L3</fullName>
    </alternativeName>
</protein>
<sequence>MAIGLIGRKVGMTRIFTEDGVSIPVTVIEVAGNRVTQVKTLETDGYRALQVTTGTKKANRITKPEAGHFAKSGVEAGRGLWEMRLVDGEGEGIEVGAELNVDIFADVAKVDVTGQSKGKGFQGGVKRWNFRTQDMTHGNSLSHRSNGSIGQNQTPGRVFKGKKMSGHMGAERVTTQNLVVVRVDVERNLLLVRGAVPGATNGDLIIKPAVKA</sequence>
<proteinExistence type="inferred from homology"/>
<feature type="chain" id="PRO_1000052133" description="Large ribosomal subunit protein uL3">
    <location>
        <begin position="1"/>
        <end position="212"/>
    </location>
</feature>
<feature type="region of interest" description="Disordered" evidence="2">
    <location>
        <begin position="136"/>
        <end position="155"/>
    </location>
</feature>
<feature type="modified residue" description="N5-methylglutamine" evidence="1">
    <location>
        <position position="153"/>
    </location>
</feature>
<evidence type="ECO:0000255" key="1">
    <source>
        <dbReference type="HAMAP-Rule" id="MF_01325"/>
    </source>
</evidence>
<evidence type="ECO:0000256" key="2">
    <source>
        <dbReference type="SAM" id="MobiDB-lite"/>
    </source>
</evidence>
<evidence type="ECO:0000305" key="3"/>
<accession>A3DA72</accession>